<gene>
    <name type="primary">GlcAT-I</name>
    <name type="ORF">CG32775</name>
</gene>
<sequence length="306" mass="35072">MSEVRIRPRQVLILIIVFLVVLMMVHRNGKRTCQGPEYLQAMFVQGDTLPTIYAVTPTYPRPAQKAELTRLSHLFMLLPHLHWIIVEDTNATTPLVRNLLDRAGLEKRSTLLNIKTPSEFKLKGKDPNWIKPRGVEQRNLALAWLRNHVDVDRHSIVFFMDDDNSYSTELFAEMSKIERGRVGVWPVGLVGGLMVERPLLTEDGTKVTGFNAAWRPERPFPIDMAAFAISMDLFIRNPQATFSYEVQRGYQESEILRHLTTRDQLQPLANRCTDVLVWHTRTEKTKLAAEEALLKKGQRSDGGMEV</sequence>
<comment type="function">
    <text evidence="4">Involved in the biosynthesis of L2/HNK-1 carbohydrate epitope on both glycolipids and glycoproteins. Shows strict specificity for Gal-beta-1,3-Gal-beta-1,4-Xyl, exhibiting negligible incorporation into other galactoside substrates.</text>
</comment>
<comment type="catalytic activity">
    <reaction evidence="2">
        <text>3-O-(beta-D-galactosyl-(1-&gt;3)-beta-D-galactosyl-(1-&gt;4)-beta-D-xylosyl)-L-seryl-[protein] + UDP-alpha-D-glucuronate = 3-O-(beta-D-GlcA-(1-&gt;3)-beta-D-Gal-(1-&gt;3)-beta-D-Gal-(1-&gt;4)-beta-D-Xyl)-L-seryl-[protein] + UDP + H(+)</text>
        <dbReference type="Rhea" id="RHEA:24168"/>
        <dbReference type="Rhea" id="RHEA-COMP:12571"/>
        <dbReference type="Rhea" id="RHEA-COMP:12573"/>
        <dbReference type="ChEBI" id="CHEBI:15378"/>
        <dbReference type="ChEBI" id="CHEBI:58052"/>
        <dbReference type="ChEBI" id="CHEBI:58223"/>
        <dbReference type="ChEBI" id="CHEBI:132090"/>
        <dbReference type="ChEBI" id="CHEBI:132093"/>
        <dbReference type="EC" id="2.4.1.135"/>
    </reaction>
</comment>
<comment type="cofactor">
    <cofactor evidence="4">
        <name>Mn(2+)</name>
        <dbReference type="ChEBI" id="CHEBI:29035"/>
    </cofactor>
</comment>
<comment type="pathway">
    <text>Protein modification; protein glycosylation.</text>
</comment>
<comment type="subcellular location">
    <subcellularLocation>
        <location evidence="5">Golgi apparatus membrane</location>
        <topology evidence="5">Single-pass type II membrane protein</topology>
    </subcellularLocation>
</comment>
<comment type="developmental stage">
    <text evidence="4">Expressed at low levels from early embryos to adults; maximal expression in third instar larvae.</text>
</comment>
<comment type="similarity">
    <text evidence="5">Belongs to the glycosyltransferase 43 family.</text>
</comment>
<comment type="sequence caution" evidence="5">
    <conflict type="erroneous gene model prediction">
        <sequence resource="EMBL-CDS" id="CAA21824"/>
    </conflict>
</comment>
<keyword id="KW-0325">Glycoprotein</keyword>
<keyword id="KW-0333">Golgi apparatus</keyword>
<keyword id="KW-0464">Manganese</keyword>
<keyword id="KW-0472">Membrane</keyword>
<keyword id="KW-0479">Metal-binding</keyword>
<keyword id="KW-1185">Reference proteome</keyword>
<keyword id="KW-0735">Signal-anchor</keyword>
<keyword id="KW-0808">Transferase</keyword>
<keyword id="KW-0812">Transmembrane</keyword>
<keyword id="KW-1133">Transmembrane helix</keyword>
<name>B3GI_DROME</name>
<evidence type="ECO:0000250" key="1"/>
<evidence type="ECO:0000250" key="2">
    <source>
        <dbReference type="UniProtKB" id="O35789"/>
    </source>
</evidence>
<evidence type="ECO:0000255" key="3"/>
<evidence type="ECO:0000269" key="4">
    <source>
    </source>
</evidence>
<evidence type="ECO:0000305" key="5"/>
<organism>
    <name type="scientific">Drosophila melanogaster</name>
    <name type="common">Fruit fly</name>
    <dbReference type="NCBI Taxonomy" id="7227"/>
    <lineage>
        <taxon>Eukaryota</taxon>
        <taxon>Metazoa</taxon>
        <taxon>Ecdysozoa</taxon>
        <taxon>Arthropoda</taxon>
        <taxon>Hexapoda</taxon>
        <taxon>Insecta</taxon>
        <taxon>Pterygota</taxon>
        <taxon>Neoptera</taxon>
        <taxon>Endopterygota</taxon>
        <taxon>Diptera</taxon>
        <taxon>Brachycera</taxon>
        <taxon>Muscomorpha</taxon>
        <taxon>Ephydroidea</taxon>
        <taxon>Drosophilidae</taxon>
        <taxon>Drosophila</taxon>
        <taxon>Sophophora</taxon>
    </lineage>
</organism>
<accession>O97422</accession>
<accession>Q8IRS6</accession>
<accession>Q95SR5</accession>
<dbReference type="EC" id="2.4.1.135" evidence="2"/>
<dbReference type="EMBL" id="AB080695">
    <property type="protein sequence ID" value="BAC65095.1"/>
    <property type="molecule type" value="mRNA"/>
</dbReference>
<dbReference type="EMBL" id="AE014298">
    <property type="protein sequence ID" value="AAN09117.1"/>
    <property type="molecule type" value="Genomic_DNA"/>
</dbReference>
<dbReference type="EMBL" id="AL033125">
    <property type="protein sequence ID" value="CAA21824.1"/>
    <property type="status" value="ALT_SEQ"/>
    <property type="molecule type" value="Genomic_DNA"/>
</dbReference>
<dbReference type="EMBL" id="AY060634">
    <property type="protein sequence ID" value="AAL28182.1"/>
    <property type="molecule type" value="mRNA"/>
</dbReference>
<dbReference type="RefSeq" id="NP_726910.1">
    <property type="nucleotide sequence ID" value="NM_167003.3"/>
</dbReference>
<dbReference type="SMR" id="O97422"/>
<dbReference type="FunCoup" id="O97422">
    <property type="interactions" value="1051"/>
</dbReference>
<dbReference type="STRING" id="7227.FBpp0070612"/>
<dbReference type="CAZy" id="GT43">
    <property type="family name" value="Glycosyltransferase Family 43"/>
</dbReference>
<dbReference type="GlyCosmos" id="O97422">
    <property type="glycosylation" value="1 site, No reported glycans"/>
</dbReference>
<dbReference type="GlyGen" id="O97422">
    <property type="glycosylation" value="2 sites"/>
</dbReference>
<dbReference type="PaxDb" id="7227-FBpp0070612"/>
<dbReference type="DNASU" id="251900"/>
<dbReference type="EnsemblMetazoa" id="FBtr0070644">
    <property type="protein sequence ID" value="FBpp0070612"/>
    <property type="gene ID" value="FBgn0066114"/>
</dbReference>
<dbReference type="GeneID" id="251900"/>
<dbReference type="KEGG" id="dme:Dmel_CG32775"/>
<dbReference type="UCSC" id="CG32775-RA">
    <property type="organism name" value="d. melanogaster"/>
</dbReference>
<dbReference type="AGR" id="FB:FBgn0066114"/>
<dbReference type="CTD" id="251900"/>
<dbReference type="FlyBase" id="FBgn0066114">
    <property type="gene designation" value="GlcAT-I"/>
</dbReference>
<dbReference type="VEuPathDB" id="VectorBase:FBgn0066114"/>
<dbReference type="eggNOG" id="KOG1476">
    <property type="taxonomic scope" value="Eukaryota"/>
</dbReference>
<dbReference type="GeneTree" id="ENSGT00940000156954"/>
<dbReference type="HOGENOM" id="CLU_045177_0_1_1"/>
<dbReference type="InParanoid" id="O97422"/>
<dbReference type="OMA" id="HTAWEPT"/>
<dbReference type="OrthoDB" id="675023at2759"/>
<dbReference type="PhylomeDB" id="O97422"/>
<dbReference type="Reactome" id="R-DME-1971475">
    <property type="pathway name" value="A tetrasaccharide linker sequence is required for GAG synthesis"/>
</dbReference>
<dbReference type="UniPathway" id="UPA00378"/>
<dbReference type="BioGRID-ORCS" id="251900">
    <property type="hits" value="0 hits in 3 CRISPR screens"/>
</dbReference>
<dbReference type="GenomeRNAi" id="251900"/>
<dbReference type="PRO" id="PR:O97422"/>
<dbReference type="Proteomes" id="UP000000803">
    <property type="component" value="Chromosome X"/>
</dbReference>
<dbReference type="Bgee" id="FBgn0066114">
    <property type="expression patterns" value="Expressed in esophagus primordium (Drosophila) and 75 other cell types or tissues"/>
</dbReference>
<dbReference type="ExpressionAtlas" id="O97422">
    <property type="expression patterns" value="baseline and differential"/>
</dbReference>
<dbReference type="GO" id="GO:0000139">
    <property type="term" value="C:Golgi membrane"/>
    <property type="evidence" value="ECO:0000318"/>
    <property type="project" value="GO_Central"/>
</dbReference>
<dbReference type="GO" id="GO:0015018">
    <property type="term" value="F:galactosylgalactosylxylosylprotein 3-beta-glucuronosyltransferase activity"/>
    <property type="evidence" value="ECO:0000314"/>
    <property type="project" value="FlyBase"/>
</dbReference>
<dbReference type="GO" id="GO:0046872">
    <property type="term" value="F:metal ion binding"/>
    <property type="evidence" value="ECO:0007669"/>
    <property type="project" value="UniProtKB-KW"/>
</dbReference>
<dbReference type="GO" id="GO:0005975">
    <property type="term" value="P:carbohydrate metabolic process"/>
    <property type="evidence" value="ECO:0000318"/>
    <property type="project" value="GO_Central"/>
</dbReference>
<dbReference type="GO" id="GO:0050650">
    <property type="term" value="P:chondroitin sulfate proteoglycan biosynthetic process"/>
    <property type="evidence" value="ECO:0000250"/>
    <property type="project" value="FlyBase"/>
</dbReference>
<dbReference type="GO" id="GO:0120532">
    <property type="term" value="P:glycosaminoglycan-protein linkage region biosynthetic process"/>
    <property type="evidence" value="ECO:0000314"/>
    <property type="project" value="FlyBase"/>
</dbReference>
<dbReference type="GO" id="GO:0015012">
    <property type="term" value="P:heparan sulfate proteoglycan biosynthetic process"/>
    <property type="evidence" value="ECO:0000250"/>
    <property type="project" value="FlyBase"/>
</dbReference>
<dbReference type="CDD" id="cd00218">
    <property type="entry name" value="GlcAT-I"/>
    <property type="match status" value="1"/>
</dbReference>
<dbReference type="FunFam" id="3.90.550.10:FF:000044">
    <property type="entry name" value="Galactosylgalactosylxylosylprotein 3-beta-glucuronosyltransferase"/>
    <property type="match status" value="1"/>
</dbReference>
<dbReference type="Gene3D" id="3.90.550.10">
    <property type="entry name" value="Spore Coat Polysaccharide Biosynthesis Protein SpsA, Chain A"/>
    <property type="match status" value="1"/>
</dbReference>
<dbReference type="InterPro" id="IPR005027">
    <property type="entry name" value="Glyco_trans_43"/>
</dbReference>
<dbReference type="InterPro" id="IPR029044">
    <property type="entry name" value="Nucleotide-diphossugar_trans"/>
</dbReference>
<dbReference type="PANTHER" id="PTHR10896:SF65">
    <property type="entry name" value="GALACTOSYLGALACTOSYLXYLOSYLPROTEIN 3-BETA-GLUCURONOSYLTRANSFERASE 3"/>
    <property type="match status" value="1"/>
</dbReference>
<dbReference type="PANTHER" id="PTHR10896">
    <property type="entry name" value="GALACTOSYLGALACTOSYLXYLOSYLPROTEIN 3-BETA-GLUCURONOSYLTRANSFERASE BETA-1,3-GLUCURONYLTRANSFERASE"/>
    <property type="match status" value="1"/>
</dbReference>
<dbReference type="Pfam" id="PF03360">
    <property type="entry name" value="Glyco_transf_43"/>
    <property type="match status" value="1"/>
</dbReference>
<dbReference type="SUPFAM" id="SSF53448">
    <property type="entry name" value="Nucleotide-diphospho-sugar transferases"/>
    <property type="match status" value="1"/>
</dbReference>
<protein>
    <recommendedName>
        <fullName>Galactosylgalactosylxylosylprotein 3-beta-glucuronosyltransferase I</fullName>
        <ecNumber evidence="2">2.4.1.135</ecNumber>
    </recommendedName>
    <alternativeName>
        <fullName>Beta-1,3-glucuronyltransferase I</fullName>
    </alternativeName>
    <alternativeName>
        <fullName>Glucuronosyltransferase I</fullName>
        <shortName>DmGlcAT-I</shortName>
    </alternativeName>
    <alternativeName>
        <fullName>UDP-GlcUA:Gal beta-1,3-Gal-R glucuronyltransferase</fullName>
        <shortName>GlcUAT-I</shortName>
    </alternativeName>
</protein>
<feature type="chain" id="PRO_0000195179" description="Galactosylgalactosylxylosylprotein 3-beta-glucuronosyltransferase I">
    <location>
        <begin position="1"/>
        <end position="306"/>
    </location>
</feature>
<feature type="topological domain" description="Cytoplasmic" evidence="3">
    <location>
        <begin position="1"/>
        <end position="11"/>
    </location>
</feature>
<feature type="transmembrane region" description="Helical; Signal-anchor for type II membrane protein" evidence="3">
    <location>
        <begin position="12"/>
        <end position="29"/>
    </location>
</feature>
<feature type="topological domain" description="Lumenal" evidence="3">
    <location>
        <begin position="30"/>
        <end position="306"/>
    </location>
</feature>
<feature type="active site" description="Proton acceptor" evidence="1">
    <location>
        <position position="252"/>
    </location>
</feature>
<feature type="binding site" evidence="1">
    <location>
        <position position="163"/>
    </location>
    <ligand>
        <name>Mn(2+)</name>
        <dbReference type="ChEBI" id="CHEBI:29035"/>
    </ligand>
</feature>
<feature type="glycosylation site" description="N-linked (GlcNAc...) asparagine" evidence="3">
    <location>
        <position position="90"/>
    </location>
</feature>
<feature type="sequence conflict" description="In Ref. 1 and 4." evidence="5" ref="1 4">
    <original>V</original>
    <variation>L</variation>
    <location>
        <position position="55"/>
    </location>
</feature>
<proteinExistence type="evidence at transcript level"/>
<reference key="1">
    <citation type="journal article" date="2003" name="J. Biol. Chem.">
        <title>Identification and characterization of three Drosophila melanogaster glucuronyltransferases responsible for the synthesis of the conserved glycosaminoglycan-protein linkage region of proteoglycans: two novel homologs exhibit broad specificity toward oligosaccharides from proteoglycans, glycoproteins, and glycosphingolipids.</title>
        <authorList>
            <person name="Kim B.-T."/>
            <person name="Tsuchida K."/>
            <person name="Lincecum J."/>
            <person name="Kitagawa K."/>
            <person name="Bernfield M."/>
            <person name="Sugahara K."/>
        </authorList>
    </citation>
    <scope>NUCLEOTIDE SEQUENCE [MRNA]</scope>
    <scope>FUNCTION</scope>
    <scope>COFACTOR</scope>
    <scope>DEVELOPMENTAL STAGE</scope>
</reference>
<reference key="2">
    <citation type="journal article" date="2000" name="Science">
        <title>The genome sequence of Drosophila melanogaster.</title>
        <authorList>
            <person name="Adams M.D."/>
            <person name="Celniker S.E."/>
            <person name="Holt R.A."/>
            <person name="Evans C.A."/>
            <person name="Gocayne J.D."/>
            <person name="Amanatides P.G."/>
            <person name="Scherer S.E."/>
            <person name="Li P.W."/>
            <person name="Hoskins R.A."/>
            <person name="Galle R.F."/>
            <person name="George R.A."/>
            <person name="Lewis S.E."/>
            <person name="Richards S."/>
            <person name="Ashburner M."/>
            <person name="Henderson S.N."/>
            <person name="Sutton G.G."/>
            <person name="Wortman J.R."/>
            <person name="Yandell M.D."/>
            <person name="Zhang Q."/>
            <person name="Chen L.X."/>
            <person name="Brandon R.C."/>
            <person name="Rogers Y.-H.C."/>
            <person name="Blazej R.G."/>
            <person name="Champe M."/>
            <person name="Pfeiffer B.D."/>
            <person name="Wan K.H."/>
            <person name="Doyle C."/>
            <person name="Baxter E.G."/>
            <person name="Helt G."/>
            <person name="Nelson C.R."/>
            <person name="Miklos G.L.G."/>
            <person name="Abril J.F."/>
            <person name="Agbayani A."/>
            <person name="An H.-J."/>
            <person name="Andrews-Pfannkoch C."/>
            <person name="Baldwin D."/>
            <person name="Ballew R.M."/>
            <person name="Basu A."/>
            <person name="Baxendale J."/>
            <person name="Bayraktaroglu L."/>
            <person name="Beasley E.M."/>
            <person name="Beeson K.Y."/>
            <person name="Benos P.V."/>
            <person name="Berman B.P."/>
            <person name="Bhandari D."/>
            <person name="Bolshakov S."/>
            <person name="Borkova D."/>
            <person name="Botchan M.R."/>
            <person name="Bouck J."/>
            <person name="Brokstein P."/>
            <person name="Brottier P."/>
            <person name="Burtis K.C."/>
            <person name="Busam D.A."/>
            <person name="Butler H."/>
            <person name="Cadieu E."/>
            <person name="Center A."/>
            <person name="Chandra I."/>
            <person name="Cherry J.M."/>
            <person name="Cawley S."/>
            <person name="Dahlke C."/>
            <person name="Davenport L.B."/>
            <person name="Davies P."/>
            <person name="de Pablos B."/>
            <person name="Delcher A."/>
            <person name="Deng Z."/>
            <person name="Mays A.D."/>
            <person name="Dew I."/>
            <person name="Dietz S.M."/>
            <person name="Dodson K."/>
            <person name="Doup L.E."/>
            <person name="Downes M."/>
            <person name="Dugan-Rocha S."/>
            <person name="Dunkov B.C."/>
            <person name="Dunn P."/>
            <person name="Durbin K.J."/>
            <person name="Evangelista C.C."/>
            <person name="Ferraz C."/>
            <person name="Ferriera S."/>
            <person name="Fleischmann W."/>
            <person name="Fosler C."/>
            <person name="Gabrielian A.E."/>
            <person name="Garg N.S."/>
            <person name="Gelbart W.M."/>
            <person name="Glasser K."/>
            <person name="Glodek A."/>
            <person name="Gong F."/>
            <person name="Gorrell J.H."/>
            <person name="Gu Z."/>
            <person name="Guan P."/>
            <person name="Harris M."/>
            <person name="Harris N.L."/>
            <person name="Harvey D.A."/>
            <person name="Heiman T.J."/>
            <person name="Hernandez J.R."/>
            <person name="Houck J."/>
            <person name="Hostin D."/>
            <person name="Houston K.A."/>
            <person name="Howland T.J."/>
            <person name="Wei M.-H."/>
            <person name="Ibegwam C."/>
            <person name="Jalali M."/>
            <person name="Kalush F."/>
            <person name="Karpen G.H."/>
            <person name="Ke Z."/>
            <person name="Kennison J.A."/>
            <person name="Ketchum K.A."/>
            <person name="Kimmel B.E."/>
            <person name="Kodira C.D."/>
            <person name="Kraft C.L."/>
            <person name="Kravitz S."/>
            <person name="Kulp D."/>
            <person name="Lai Z."/>
            <person name="Lasko P."/>
            <person name="Lei Y."/>
            <person name="Levitsky A.A."/>
            <person name="Li J.H."/>
            <person name="Li Z."/>
            <person name="Liang Y."/>
            <person name="Lin X."/>
            <person name="Liu X."/>
            <person name="Mattei B."/>
            <person name="McIntosh T.C."/>
            <person name="McLeod M.P."/>
            <person name="McPherson D."/>
            <person name="Merkulov G."/>
            <person name="Milshina N.V."/>
            <person name="Mobarry C."/>
            <person name="Morris J."/>
            <person name="Moshrefi A."/>
            <person name="Mount S.M."/>
            <person name="Moy M."/>
            <person name="Murphy B."/>
            <person name="Murphy L."/>
            <person name="Muzny D.M."/>
            <person name="Nelson D.L."/>
            <person name="Nelson D.R."/>
            <person name="Nelson K.A."/>
            <person name="Nixon K."/>
            <person name="Nusskern D.R."/>
            <person name="Pacleb J.M."/>
            <person name="Palazzolo M."/>
            <person name="Pittman G.S."/>
            <person name="Pan S."/>
            <person name="Pollard J."/>
            <person name="Puri V."/>
            <person name="Reese M.G."/>
            <person name="Reinert K."/>
            <person name="Remington K."/>
            <person name="Saunders R.D.C."/>
            <person name="Scheeler F."/>
            <person name="Shen H."/>
            <person name="Shue B.C."/>
            <person name="Siden-Kiamos I."/>
            <person name="Simpson M."/>
            <person name="Skupski M.P."/>
            <person name="Smith T.J."/>
            <person name="Spier E."/>
            <person name="Spradling A.C."/>
            <person name="Stapleton M."/>
            <person name="Strong R."/>
            <person name="Sun E."/>
            <person name="Svirskas R."/>
            <person name="Tector C."/>
            <person name="Turner R."/>
            <person name="Venter E."/>
            <person name="Wang A.H."/>
            <person name="Wang X."/>
            <person name="Wang Z.-Y."/>
            <person name="Wassarman D.A."/>
            <person name="Weinstock G.M."/>
            <person name="Weissenbach J."/>
            <person name="Williams S.M."/>
            <person name="Woodage T."/>
            <person name="Worley K.C."/>
            <person name="Wu D."/>
            <person name="Yang S."/>
            <person name="Yao Q.A."/>
            <person name="Ye J."/>
            <person name="Yeh R.-F."/>
            <person name="Zaveri J.S."/>
            <person name="Zhan M."/>
            <person name="Zhang G."/>
            <person name="Zhao Q."/>
            <person name="Zheng L."/>
            <person name="Zheng X.H."/>
            <person name="Zhong F.N."/>
            <person name="Zhong W."/>
            <person name="Zhou X."/>
            <person name="Zhu S.C."/>
            <person name="Zhu X."/>
            <person name="Smith H.O."/>
            <person name="Gibbs R.A."/>
            <person name="Myers E.W."/>
            <person name="Rubin G.M."/>
            <person name="Venter J.C."/>
        </authorList>
    </citation>
    <scope>NUCLEOTIDE SEQUENCE [LARGE SCALE GENOMIC DNA]</scope>
    <source>
        <strain>Berkeley</strain>
    </source>
</reference>
<reference key="3">
    <citation type="journal article" date="2002" name="Genome Biol.">
        <title>Annotation of the Drosophila melanogaster euchromatic genome: a systematic review.</title>
        <authorList>
            <person name="Misra S."/>
            <person name="Crosby M.A."/>
            <person name="Mungall C.J."/>
            <person name="Matthews B.B."/>
            <person name="Campbell K.S."/>
            <person name="Hradecky P."/>
            <person name="Huang Y."/>
            <person name="Kaminker J.S."/>
            <person name="Millburn G.H."/>
            <person name="Prochnik S.E."/>
            <person name="Smith C.D."/>
            <person name="Tupy J.L."/>
            <person name="Whitfield E.J."/>
            <person name="Bayraktaroglu L."/>
            <person name="Berman B.P."/>
            <person name="Bettencourt B.R."/>
            <person name="Celniker S.E."/>
            <person name="de Grey A.D.N.J."/>
            <person name="Drysdale R.A."/>
            <person name="Harris N.L."/>
            <person name="Richter J."/>
            <person name="Russo S."/>
            <person name="Schroeder A.J."/>
            <person name="Shu S.Q."/>
            <person name="Stapleton M."/>
            <person name="Yamada C."/>
            <person name="Ashburner M."/>
            <person name="Gelbart W.M."/>
            <person name="Rubin G.M."/>
            <person name="Lewis S.E."/>
        </authorList>
    </citation>
    <scope>GENOME REANNOTATION</scope>
    <source>
        <strain>Berkeley</strain>
    </source>
</reference>
<reference key="4">
    <citation type="journal article" date="2000" name="Science">
        <title>From sequence to chromosome: the tip of the X chromosome of D. melanogaster.</title>
        <authorList>
            <person name="Benos P.V."/>
            <person name="Gatt M.K."/>
            <person name="Ashburner M."/>
            <person name="Murphy L."/>
            <person name="Harris D."/>
            <person name="Barrell B.G."/>
            <person name="Ferraz C."/>
            <person name="Vidal S."/>
            <person name="Brun C."/>
            <person name="Demailles J."/>
            <person name="Cadieu E."/>
            <person name="Dreano S."/>
            <person name="Gloux S."/>
            <person name="Lelaure V."/>
            <person name="Mottier S."/>
            <person name="Galibert F."/>
            <person name="Borkova D."/>
            <person name="Minana B."/>
            <person name="Kafatos F.C."/>
            <person name="Louis C."/>
            <person name="Siden-Kiamos I."/>
            <person name="Bolshakov S."/>
            <person name="Papagiannakis G."/>
            <person name="Spanos L."/>
            <person name="Cox S."/>
            <person name="Madueno E."/>
            <person name="de Pablos B."/>
            <person name="Modolell J."/>
            <person name="Peter A."/>
            <person name="Schoettler P."/>
            <person name="Werner M."/>
            <person name="Mourkioti F."/>
            <person name="Beinert N."/>
            <person name="Dowe G."/>
            <person name="Schaefer U."/>
            <person name="Jaeckle H."/>
            <person name="Bucheton A."/>
            <person name="Callister D.M."/>
            <person name="Campbell L.A."/>
            <person name="Darlamitsou A."/>
            <person name="Henderson N.S."/>
            <person name="McMillan P.J."/>
            <person name="Salles C."/>
            <person name="Tait E.A."/>
            <person name="Valenti P."/>
            <person name="Saunders R.D.C."/>
            <person name="Glover D.M."/>
        </authorList>
    </citation>
    <scope>NUCLEOTIDE SEQUENCE [LARGE SCALE GENOMIC DNA]</scope>
    <source>
        <strain>Oregon-R</strain>
    </source>
</reference>
<reference key="5">
    <citation type="journal article" date="2002" name="Genome Biol.">
        <title>A Drosophila full-length cDNA resource.</title>
        <authorList>
            <person name="Stapleton M."/>
            <person name="Carlson J.W."/>
            <person name="Brokstein P."/>
            <person name="Yu C."/>
            <person name="Champe M."/>
            <person name="George R.A."/>
            <person name="Guarin H."/>
            <person name="Kronmiller B."/>
            <person name="Pacleb J.M."/>
            <person name="Park S."/>
            <person name="Wan K.H."/>
            <person name="Rubin G.M."/>
            <person name="Celniker S.E."/>
        </authorList>
    </citation>
    <scope>NUCLEOTIDE SEQUENCE [LARGE SCALE MRNA]</scope>
    <source>
        <strain>Berkeley</strain>
        <tissue>Head</tissue>
    </source>
</reference>